<comment type="catalytic activity">
    <reaction evidence="1">
        <text>5-amino-1-(5-phospho-D-ribosyl)imidazole-4-carboxylate + L-aspartate + ATP = (2S)-2-[5-amino-1-(5-phospho-beta-D-ribosyl)imidazole-4-carboxamido]succinate + ADP + phosphate + 2 H(+)</text>
        <dbReference type="Rhea" id="RHEA:22628"/>
        <dbReference type="ChEBI" id="CHEBI:15378"/>
        <dbReference type="ChEBI" id="CHEBI:29991"/>
        <dbReference type="ChEBI" id="CHEBI:30616"/>
        <dbReference type="ChEBI" id="CHEBI:43474"/>
        <dbReference type="ChEBI" id="CHEBI:58443"/>
        <dbReference type="ChEBI" id="CHEBI:77657"/>
        <dbReference type="ChEBI" id="CHEBI:456216"/>
        <dbReference type="EC" id="6.3.2.6"/>
    </reaction>
</comment>
<comment type="pathway">
    <text evidence="1">Purine metabolism; IMP biosynthesis via de novo pathway; 5-amino-1-(5-phospho-D-ribosyl)imidazole-4-carboxamide from 5-amino-1-(5-phospho-D-ribosyl)imidazole-4-carboxylate: step 1/2.</text>
</comment>
<comment type="similarity">
    <text evidence="1">Belongs to the SAICAR synthetase family.</text>
</comment>
<name>PUR7_ECO55</name>
<proteinExistence type="inferred from homology"/>
<accession>B7LCL4</accession>
<protein>
    <recommendedName>
        <fullName evidence="1">Phosphoribosylaminoimidazole-succinocarboxamide synthase</fullName>
        <ecNumber evidence="1">6.3.2.6</ecNumber>
    </recommendedName>
    <alternativeName>
        <fullName evidence="1">SAICAR synthetase</fullName>
    </alternativeName>
</protein>
<sequence>MQKQAELYRGKAKTVYSTENPDLLVLEFRNDTSAGDGARIEQFDRKGMVNNKFNYFIMSKLAEAGIPTQMERLLSDTECLVKKLDMVPVECVVRNRAAGSLVKRLGIEEGIELNPPLFDLFLKNDAMHDPMVNESYCETFGWVSKENLARMKELTYKANDVLKKLFDDAGLILVDFKLEFGLYKGEVVLGDEFSPDGSRLWDKETLEKMDKDRFRQSLGGLIEAYEAVARRLGVQLD</sequence>
<reference key="1">
    <citation type="journal article" date="2009" name="PLoS Genet.">
        <title>Organised genome dynamics in the Escherichia coli species results in highly diverse adaptive paths.</title>
        <authorList>
            <person name="Touchon M."/>
            <person name="Hoede C."/>
            <person name="Tenaillon O."/>
            <person name="Barbe V."/>
            <person name="Baeriswyl S."/>
            <person name="Bidet P."/>
            <person name="Bingen E."/>
            <person name="Bonacorsi S."/>
            <person name="Bouchier C."/>
            <person name="Bouvet O."/>
            <person name="Calteau A."/>
            <person name="Chiapello H."/>
            <person name="Clermont O."/>
            <person name="Cruveiller S."/>
            <person name="Danchin A."/>
            <person name="Diard M."/>
            <person name="Dossat C."/>
            <person name="Karoui M.E."/>
            <person name="Frapy E."/>
            <person name="Garry L."/>
            <person name="Ghigo J.M."/>
            <person name="Gilles A.M."/>
            <person name="Johnson J."/>
            <person name="Le Bouguenec C."/>
            <person name="Lescat M."/>
            <person name="Mangenot S."/>
            <person name="Martinez-Jehanne V."/>
            <person name="Matic I."/>
            <person name="Nassif X."/>
            <person name="Oztas S."/>
            <person name="Petit M.A."/>
            <person name="Pichon C."/>
            <person name="Rouy Z."/>
            <person name="Ruf C.S."/>
            <person name="Schneider D."/>
            <person name="Tourret J."/>
            <person name="Vacherie B."/>
            <person name="Vallenet D."/>
            <person name="Medigue C."/>
            <person name="Rocha E.P.C."/>
            <person name="Denamur E."/>
        </authorList>
    </citation>
    <scope>NUCLEOTIDE SEQUENCE [LARGE SCALE GENOMIC DNA]</scope>
    <source>
        <strain>55989 / EAEC</strain>
    </source>
</reference>
<evidence type="ECO:0000255" key="1">
    <source>
        <dbReference type="HAMAP-Rule" id="MF_00137"/>
    </source>
</evidence>
<keyword id="KW-0067">ATP-binding</keyword>
<keyword id="KW-0436">Ligase</keyword>
<keyword id="KW-0547">Nucleotide-binding</keyword>
<keyword id="KW-0658">Purine biosynthesis</keyword>
<keyword id="KW-1185">Reference proteome</keyword>
<gene>
    <name evidence="1" type="primary">purC</name>
    <name type="ordered locus">EC55989_2759</name>
</gene>
<organism>
    <name type="scientific">Escherichia coli (strain 55989 / EAEC)</name>
    <dbReference type="NCBI Taxonomy" id="585055"/>
    <lineage>
        <taxon>Bacteria</taxon>
        <taxon>Pseudomonadati</taxon>
        <taxon>Pseudomonadota</taxon>
        <taxon>Gammaproteobacteria</taxon>
        <taxon>Enterobacterales</taxon>
        <taxon>Enterobacteriaceae</taxon>
        <taxon>Escherichia</taxon>
    </lineage>
</organism>
<feature type="chain" id="PRO_1000122914" description="Phosphoribosylaminoimidazole-succinocarboxamide synthase">
    <location>
        <begin position="1"/>
        <end position="237"/>
    </location>
</feature>
<dbReference type="EC" id="6.3.2.6" evidence="1"/>
<dbReference type="EMBL" id="CU928145">
    <property type="protein sequence ID" value="CAU98629.1"/>
    <property type="molecule type" value="Genomic_DNA"/>
</dbReference>
<dbReference type="RefSeq" id="WP_001295467.1">
    <property type="nucleotide sequence ID" value="NZ_CP028304.1"/>
</dbReference>
<dbReference type="SMR" id="B7LCL4"/>
<dbReference type="GeneID" id="89517285"/>
<dbReference type="KEGG" id="eck:EC55989_2759"/>
<dbReference type="HOGENOM" id="CLU_061495_2_1_6"/>
<dbReference type="UniPathway" id="UPA00074">
    <property type="reaction ID" value="UER00131"/>
</dbReference>
<dbReference type="Proteomes" id="UP000000746">
    <property type="component" value="Chromosome"/>
</dbReference>
<dbReference type="GO" id="GO:0005829">
    <property type="term" value="C:cytosol"/>
    <property type="evidence" value="ECO:0007669"/>
    <property type="project" value="TreeGrafter"/>
</dbReference>
<dbReference type="GO" id="GO:0005524">
    <property type="term" value="F:ATP binding"/>
    <property type="evidence" value="ECO:0007669"/>
    <property type="project" value="UniProtKB-KW"/>
</dbReference>
<dbReference type="GO" id="GO:0004639">
    <property type="term" value="F:phosphoribosylaminoimidazolesuccinocarboxamide synthase activity"/>
    <property type="evidence" value="ECO:0007669"/>
    <property type="project" value="UniProtKB-UniRule"/>
</dbReference>
<dbReference type="GO" id="GO:0006189">
    <property type="term" value="P:'de novo' IMP biosynthetic process"/>
    <property type="evidence" value="ECO:0007669"/>
    <property type="project" value="UniProtKB-UniRule"/>
</dbReference>
<dbReference type="GO" id="GO:0009236">
    <property type="term" value="P:cobalamin biosynthetic process"/>
    <property type="evidence" value="ECO:0007669"/>
    <property type="project" value="InterPro"/>
</dbReference>
<dbReference type="CDD" id="cd01415">
    <property type="entry name" value="SAICAR_synt_PurC"/>
    <property type="match status" value="1"/>
</dbReference>
<dbReference type="FunFam" id="3.30.200.20:FF:000086">
    <property type="entry name" value="Phosphoribosylaminoimidazole-succinocarboxamide synthase"/>
    <property type="match status" value="1"/>
</dbReference>
<dbReference type="FunFam" id="3.30.470.20:FF:000006">
    <property type="entry name" value="Phosphoribosylaminoimidazole-succinocarboxamide synthase"/>
    <property type="match status" value="1"/>
</dbReference>
<dbReference type="Gene3D" id="3.30.470.20">
    <property type="entry name" value="ATP-grasp fold, B domain"/>
    <property type="match status" value="1"/>
</dbReference>
<dbReference type="Gene3D" id="3.30.200.20">
    <property type="entry name" value="Phosphorylase Kinase, domain 1"/>
    <property type="match status" value="1"/>
</dbReference>
<dbReference type="HAMAP" id="MF_00137">
    <property type="entry name" value="SAICAR_synth"/>
    <property type="match status" value="1"/>
</dbReference>
<dbReference type="InterPro" id="IPR028923">
    <property type="entry name" value="SAICAR_synt/ADE2_N"/>
</dbReference>
<dbReference type="InterPro" id="IPR033934">
    <property type="entry name" value="SAICAR_synt_PurC"/>
</dbReference>
<dbReference type="InterPro" id="IPR001636">
    <property type="entry name" value="SAICAR_synth"/>
</dbReference>
<dbReference type="InterPro" id="IPR050089">
    <property type="entry name" value="SAICAR_synthetase"/>
</dbReference>
<dbReference type="InterPro" id="IPR018236">
    <property type="entry name" value="SAICAR_synthetase_CS"/>
</dbReference>
<dbReference type="NCBIfam" id="TIGR00081">
    <property type="entry name" value="purC"/>
    <property type="match status" value="1"/>
</dbReference>
<dbReference type="PANTHER" id="PTHR43599">
    <property type="entry name" value="MULTIFUNCTIONAL PROTEIN ADE2"/>
    <property type="match status" value="1"/>
</dbReference>
<dbReference type="PANTHER" id="PTHR43599:SF3">
    <property type="entry name" value="SI:DKEY-6E2.2"/>
    <property type="match status" value="1"/>
</dbReference>
<dbReference type="Pfam" id="PF01259">
    <property type="entry name" value="SAICAR_synt"/>
    <property type="match status" value="1"/>
</dbReference>
<dbReference type="SUPFAM" id="SSF56104">
    <property type="entry name" value="SAICAR synthase-like"/>
    <property type="match status" value="1"/>
</dbReference>
<dbReference type="PROSITE" id="PS01057">
    <property type="entry name" value="SAICAR_SYNTHETASE_1"/>
    <property type="match status" value="1"/>
</dbReference>
<dbReference type="PROSITE" id="PS01058">
    <property type="entry name" value="SAICAR_SYNTHETASE_2"/>
    <property type="match status" value="1"/>
</dbReference>